<sequence>MTIIESILSIATVQNNSNNNNNQKTPFANVYQLYNSTILFNNNQLTRKRIR</sequence>
<organism>
    <name type="scientific">Dictyostelium discoideum</name>
    <name type="common">Social amoeba</name>
    <dbReference type="NCBI Taxonomy" id="44689"/>
    <lineage>
        <taxon>Eukaryota</taxon>
        <taxon>Amoebozoa</taxon>
        <taxon>Evosea</taxon>
        <taxon>Eumycetozoa</taxon>
        <taxon>Dictyostelia</taxon>
        <taxon>Dictyosteliales</taxon>
        <taxon>Dictyosteliaceae</taxon>
        <taxon>Dictyostelium</taxon>
    </lineage>
</organism>
<dbReference type="EMBL" id="AAFI02000014">
    <property type="protein sequence ID" value="EAL69380.1"/>
    <property type="molecule type" value="Genomic_DNA"/>
</dbReference>
<dbReference type="RefSeq" id="XP_643241.1">
    <property type="nucleotide sequence ID" value="XM_638149.1"/>
</dbReference>
<dbReference type="PaxDb" id="44689-DDB0305128"/>
<dbReference type="EnsemblProtists" id="EAL69380">
    <property type="protein sequence ID" value="EAL69380"/>
    <property type="gene ID" value="DDB_G0276161"/>
</dbReference>
<dbReference type="GeneID" id="8620283"/>
<dbReference type="KEGG" id="ddi:DDB_G0276161"/>
<dbReference type="dictyBase" id="DDB_G0276161"/>
<dbReference type="VEuPathDB" id="AmoebaDB:DDB_G0276161"/>
<dbReference type="HOGENOM" id="CLU_3110389_0_0_1"/>
<dbReference type="InParanoid" id="Q75JF1"/>
<dbReference type="PRO" id="PR:Q75JF1"/>
<dbReference type="Proteomes" id="UP000002195">
    <property type="component" value="Chromosome 2"/>
</dbReference>
<proteinExistence type="predicted"/>
<gene>
    <name type="ORF">DDB_G0276161</name>
</gene>
<protein>
    <recommendedName>
        <fullName>Putative uncharacterized protein DDB_G0276161</fullName>
    </recommendedName>
</protein>
<feature type="chain" id="PRO_0000348198" description="Putative uncharacterized protein DDB_G0276161">
    <location>
        <begin position="1"/>
        <end position="51"/>
    </location>
</feature>
<name>Y9533_DICDI</name>
<keyword id="KW-1185">Reference proteome</keyword>
<accession>Q75JF1</accession>
<accession>Q552G9</accession>
<reference key="1">
    <citation type="journal article" date="2002" name="Nature">
        <title>Sequence and analysis of chromosome 2 of Dictyostelium discoideum.</title>
        <authorList>
            <person name="Gloeckner G."/>
            <person name="Eichinger L."/>
            <person name="Szafranski K."/>
            <person name="Pachebat J.A."/>
            <person name="Bankier A.T."/>
            <person name="Dear P.H."/>
            <person name="Lehmann R."/>
            <person name="Baumgart C."/>
            <person name="Parra G."/>
            <person name="Abril J.F."/>
            <person name="Guigo R."/>
            <person name="Kumpf K."/>
            <person name="Tunggal B."/>
            <person name="Cox E.C."/>
            <person name="Quail M.A."/>
            <person name="Platzer M."/>
            <person name="Rosenthal A."/>
            <person name="Noegel A.A."/>
        </authorList>
    </citation>
    <scope>NUCLEOTIDE SEQUENCE [LARGE SCALE GENOMIC DNA]</scope>
    <source>
        <strain>AX4</strain>
    </source>
</reference>
<reference key="2">
    <citation type="journal article" date="2005" name="Nature">
        <title>The genome of the social amoeba Dictyostelium discoideum.</title>
        <authorList>
            <person name="Eichinger L."/>
            <person name="Pachebat J.A."/>
            <person name="Gloeckner G."/>
            <person name="Rajandream M.A."/>
            <person name="Sucgang R."/>
            <person name="Berriman M."/>
            <person name="Song J."/>
            <person name="Olsen R."/>
            <person name="Szafranski K."/>
            <person name="Xu Q."/>
            <person name="Tunggal B."/>
            <person name="Kummerfeld S."/>
            <person name="Madera M."/>
            <person name="Konfortov B.A."/>
            <person name="Rivero F."/>
            <person name="Bankier A.T."/>
            <person name="Lehmann R."/>
            <person name="Hamlin N."/>
            <person name="Davies R."/>
            <person name="Gaudet P."/>
            <person name="Fey P."/>
            <person name="Pilcher K."/>
            <person name="Chen G."/>
            <person name="Saunders D."/>
            <person name="Sodergren E.J."/>
            <person name="Davis P."/>
            <person name="Kerhornou A."/>
            <person name="Nie X."/>
            <person name="Hall N."/>
            <person name="Anjard C."/>
            <person name="Hemphill L."/>
            <person name="Bason N."/>
            <person name="Farbrother P."/>
            <person name="Desany B."/>
            <person name="Just E."/>
            <person name="Morio T."/>
            <person name="Rost R."/>
            <person name="Churcher C.M."/>
            <person name="Cooper J."/>
            <person name="Haydock S."/>
            <person name="van Driessche N."/>
            <person name="Cronin A."/>
            <person name="Goodhead I."/>
            <person name="Muzny D.M."/>
            <person name="Mourier T."/>
            <person name="Pain A."/>
            <person name="Lu M."/>
            <person name="Harper D."/>
            <person name="Lindsay R."/>
            <person name="Hauser H."/>
            <person name="James K.D."/>
            <person name="Quiles M."/>
            <person name="Madan Babu M."/>
            <person name="Saito T."/>
            <person name="Buchrieser C."/>
            <person name="Wardroper A."/>
            <person name="Felder M."/>
            <person name="Thangavelu M."/>
            <person name="Johnson D."/>
            <person name="Knights A."/>
            <person name="Loulseged H."/>
            <person name="Mungall K.L."/>
            <person name="Oliver K."/>
            <person name="Price C."/>
            <person name="Quail M.A."/>
            <person name="Urushihara H."/>
            <person name="Hernandez J."/>
            <person name="Rabbinowitsch E."/>
            <person name="Steffen D."/>
            <person name="Sanders M."/>
            <person name="Ma J."/>
            <person name="Kohara Y."/>
            <person name="Sharp S."/>
            <person name="Simmonds M.N."/>
            <person name="Spiegler S."/>
            <person name="Tivey A."/>
            <person name="Sugano S."/>
            <person name="White B."/>
            <person name="Walker D."/>
            <person name="Woodward J.R."/>
            <person name="Winckler T."/>
            <person name="Tanaka Y."/>
            <person name="Shaulsky G."/>
            <person name="Schleicher M."/>
            <person name="Weinstock G.M."/>
            <person name="Rosenthal A."/>
            <person name="Cox E.C."/>
            <person name="Chisholm R.L."/>
            <person name="Gibbs R.A."/>
            <person name="Loomis W.F."/>
            <person name="Platzer M."/>
            <person name="Kay R.R."/>
            <person name="Williams J.G."/>
            <person name="Dear P.H."/>
            <person name="Noegel A.A."/>
            <person name="Barrell B.G."/>
            <person name="Kuspa A."/>
        </authorList>
    </citation>
    <scope>NUCLEOTIDE SEQUENCE [LARGE SCALE GENOMIC DNA]</scope>
    <source>
        <strain>AX4</strain>
    </source>
</reference>